<accession>A8LRY5</accession>
<evidence type="ECO:0000255" key="1">
    <source>
        <dbReference type="HAMAP-Rule" id="MF_00083"/>
    </source>
</evidence>
<evidence type="ECO:0000256" key="2">
    <source>
        <dbReference type="SAM" id="MobiDB-lite"/>
    </source>
</evidence>
<proteinExistence type="inferred from homology"/>
<reference key="1">
    <citation type="journal article" date="2010" name="ISME J.">
        <title>The complete genome sequence of the algal symbiont Dinoroseobacter shibae: a hitchhiker's guide to life in the sea.</title>
        <authorList>
            <person name="Wagner-Dobler I."/>
            <person name="Ballhausen B."/>
            <person name="Berger M."/>
            <person name="Brinkhoff T."/>
            <person name="Buchholz I."/>
            <person name="Bunk B."/>
            <person name="Cypionka H."/>
            <person name="Daniel R."/>
            <person name="Drepper T."/>
            <person name="Gerdts G."/>
            <person name="Hahnke S."/>
            <person name="Han C."/>
            <person name="Jahn D."/>
            <person name="Kalhoefer D."/>
            <person name="Kiss H."/>
            <person name="Klenk H.P."/>
            <person name="Kyrpides N."/>
            <person name="Liebl W."/>
            <person name="Liesegang H."/>
            <person name="Meincke L."/>
            <person name="Pati A."/>
            <person name="Petersen J."/>
            <person name="Piekarski T."/>
            <person name="Pommerenke C."/>
            <person name="Pradella S."/>
            <person name="Pukall R."/>
            <person name="Rabus R."/>
            <person name="Stackebrandt E."/>
            <person name="Thole S."/>
            <person name="Thompson L."/>
            <person name="Tielen P."/>
            <person name="Tomasch J."/>
            <person name="von Jan M."/>
            <person name="Wanphrut N."/>
            <person name="Wichels A."/>
            <person name="Zech H."/>
            <person name="Simon M."/>
        </authorList>
    </citation>
    <scope>NUCLEOTIDE SEQUENCE [LARGE SCALE GENOMIC DNA]</scope>
    <source>
        <strain>DSM 16493 / NCIMB 14021 / DFL 12</strain>
    </source>
</reference>
<dbReference type="EC" id="3.1.1.29" evidence="1"/>
<dbReference type="EMBL" id="CP000830">
    <property type="protein sequence ID" value="ABV92692.1"/>
    <property type="molecule type" value="Genomic_DNA"/>
</dbReference>
<dbReference type="RefSeq" id="WP_012177624.1">
    <property type="nucleotide sequence ID" value="NC_009952.1"/>
</dbReference>
<dbReference type="SMR" id="A8LRY5"/>
<dbReference type="STRING" id="398580.Dshi_0947"/>
<dbReference type="KEGG" id="dsh:Dshi_0947"/>
<dbReference type="eggNOG" id="COG0193">
    <property type="taxonomic scope" value="Bacteria"/>
</dbReference>
<dbReference type="HOGENOM" id="CLU_062456_1_0_5"/>
<dbReference type="OrthoDB" id="9800507at2"/>
<dbReference type="Proteomes" id="UP000006833">
    <property type="component" value="Chromosome"/>
</dbReference>
<dbReference type="GO" id="GO:0005737">
    <property type="term" value="C:cytoplasm"/>
    <property type="evidence" value="ECO:0007669"/>
    <property type="project" value="UniProtKB-SubCell"/>
</dbReference>
<dbReference type="GO" id="GO:0004045">
    <property type="term" value="F:peptidyl-tRNA hydrolase activity"/>
    <property type="evidence" value="ECO:0007669"/>
    <property type="project" value="UniProtKB-UniRule"/>
</dbReference>
<dbReference type="GO" id="GO:0000049">
    <property type="term" value="F:tRNA binding"/>
    <property type="evidence" value="ECO:0007669"/>
    <property type="project" value="UniProtKB-UniRule"/>
</dbReference>
<dbReference type="GO" id="GO:0006515">
    <property type="term" value="P:protein quality control for misfolded or incompletely synthesized proteins"/>
    <property type="evidence" value="ECO:0007669"/>
    <property type="project" value="UniProtKB-UniRule"/>
</dbReference>
<dbReference type="GO" id="GO:0072344">
    <property type="term" value="P:rescue of stalled ribosome"/>
    <property type="evidence" value="ECO:0007669"/>
    <property type="project" value="UniProtKB-UniRule"/>
</dbReference>
<dbReference type="CDD" id="cd00462">
    <property type="entry name" value="PTH"/>
    <property type="match status" value="1"/>
</dbReference>
<dbReference type="FunFam" id="3.40.50.1470:FF:000001">
    <property type="entry name" value="Peptidyl-tRNA hydrolase"/>
    <property type="match status" value="1"/>
</dbReference>
<dbReference type="Gene3D" id="3.40.50.1470">
    <property type="entry name" value="Peptidyl-tRNA hydrolase"/>
    <property type="match status" value="1"/>
</dbReference>
<dbReference type="HAMAP" id="MF_00083">
    <property type="entry name" value="Pept_tRNA_hydro_bact"/>
    <property type="match status" value="1"/>
</dbReference>
<dbReference type="InterPro" id="IPR001328">
    <property type="entry name" value="Pept_tRNA_hydro"/>
</dbReference>
<dbReference type="InterPro" id="IPR018171">
    <property type="entry name" value="Pept_tRNA_hydro_CS"/>
</dbReference>
<dbReference type="InterPro" id="IPR036416">
    <property type="entry name" value="Pept_tRNA_hydro_sf"/>
</dbReference>
<dbReference type="NCBIfam" id="TIGR00447">
    <property type="entry name" value="pth"/>
    <property type="match status" value="1"/>
</dbReference>
<dbReference type="PANTHER" id="PTHR17224">
    <property type="entry name" value="PEPTIDYL-TRNA HYDROLASE"/>
    <property type="match status" value="1"/>
</dbReference>
<dbReference type="PANTHER" id="PTHR17224:SF1">
    <property type="entry name" value="PEPTIDYL-TRNA HYDROLASE"/>
    <property type="match status" value="1"/>
</dbReference>
<dbReference type="Pfam" id="PF01195">
    <property type="entry name" value="Pept_tRNA_hydro"/>
    <property type="match status" value="1"/>
</dbReference>
<dbReference type="SUPFAM" id="SSF53178">
    <property type="entry name" value="Peptidyl-tRNA hydrolase-like"/>
    <property type="match status" value="1"/>
</dbReference>
<dbReference type="PROSITE" id="PS01195">
    <property type="entry name" value="PEPT_TRNA_HYDROL_1"/>
    <property type="match status" value="1"/>
</dbReference>
<dbReference type="PROSITE" id="PS01196">
    <property type="entry name" value="PEPT_TRNA_HYDROL_2"/>
    <property type="match status" value="1"/>
</dbReference>
<organism>
    <name type="scientific">Dinoroseobacter shibae (strain DSM 16493 / NCIMB 14021 / DFL 12)</name>
    <dbReference type="NCBI Taxonomy" id="398580"/>
    <lineage>
        <taxon>Bacteria</taxon>
        <taxon>Pseudomonadati</taxon>
        <taxon>Pseudomonadota</taxon>
        <taxon>Alphaproteobacteria</taxon>
        <taxon>Rhodobacterales</taxon>
        <taxon>Roseobacteraceae</taxon>
        <taxon>Dinoroseobacter</taxon>
    </lineage>
</organism>
<comment type="function">
    <text evidence="1">Hydrolyzes ribosome-free peptidyl-tRNAs (with 1 or more amino acids incorporated), which drop off the ribosome during protein synthesis, or as a result of ribosome stalling.</text>
</comment>
<comment type="function">
    <text evidence="1">Catalyzes the release of premature peptidyl moieties from peptidyl-tRNA molecules trapped in stalled 50S ribosomal subunits, and thus maintains levels of free tRNAs and 50S ribosomes.</text>
</comment>
<comment type="catalytic activity">
    <reaction evidence="1">
        <text>an N-acyl-L-alpha-aminoacyl-tRNA + H2O = an N-acyl-L-amino acid + a tRNA + H(+)</text>
        <dbReference type="Rhea" id="RHEA:54448"/>
        <dbReference type="Rhea" id="RHEA-COMP:10123"/>
        <dbReference type="Rhea" id="RHEA-COMP:13883"/>
        <dbReference type="ChEBI" id="CHEBI:15377"/>
        <dbReference type="ChEBI" id="CHEBI:15378"/>
        <dbReference type="ChEBI" id="CHEBI:59874"/>
        <dbReference type="ChEBI" id="CHEBI:78442"/>
        <dbReference type="ChEBI" id="CHEBI:138191"/>
        <dbReference type="EC" id="3.1.1.29"/>
    </reaction>
</comment>
<comment type="subunit">
    <text evidence="1">Monomer.</text>
</comment>
<comment type="subcellular location">
    <subcellularLocation>
        <location evidence="1">Cytoplasm</location>
    </subcellularLocation>
</comment>
<comment type="similarity">
    <text evidence="1">Belongs to the PTH family.</text>
</comment>
<protein>
    <recommendedName>
        <fullName evidence="1">Peptidyl-tRNA hydrolase</fullName>
        <shortName evidence="1">Pth</shortName>
        <ecNumber evidence="1">3.1.1.29</ecNumber>
    </recommendedName>
</protein>
<gene>
    <name evidence="1" type="primary">pth</name>
    <name type="ordered locus">Dshi_0947</name>
</gene>
<feature type="chain" id="PRO_1000075339" description="Peptidyl-tRNA hydrolase">
    <location>
        <begin position="1"/>
        <end position="235"/>
    </location>
</feature>
<feature type="region of interest" description="Disordered" evidence="2">
    <location>
        <begin position="186"/>
        <end position="235"/>
    </location>
</feature>
<feature type="compositionally biased region" description="Basic and acidic residues" evidence="2">
    <location>
        <begin position="198"/>
        <end position="207"/>
    </location>
</feature>
<feature type="active site" description="Proton acceptor" evidence="1">
    <location>
        <position position="19"/>
    </location>
</feature>
<feature type="binding site" evidence="1">
    <location>
        <position position="14"/>
    </location>
    <ligand>
        <name>tRNA</name>
        <dbReference type="ChEBI" id="CHEBI:17843"/>
    </ligand>
</feature>
<feature type="binding site" evidence="1">
    <location>
        <position position="64"/>
    </location>
    <ligand>
        <name>tRNA</name>
        <dbReference type="ChEBI" id="CHEBI:17843"/>
    </ligand>
</feature>
<feature type="binding site" evidence="1">
    <location>
        <position position="66"/>
    </location>
    <ligand>
        <name>tRNA</name>
        <dbReference type="ChEBI" id="CHEBI:17843"/>
    </ligand>
</feature>
<feature type="binding site" evidence="1">
    <location>
        <position position="112"/>
    </location>
    <ligand>
        <name>tRNA</name>
        <dbReference type="ChEBI" id="CHEBI:17843"/>
    </ligand>
</feature>
<feature type="site" description="Discriminates between blocked and unblocked aminoacyl-tRNA" evidence="1">
    <location>
        <position position="9"/>
    </location>
</feature>
<feature type="site" description="Stabilizes the basic form of H active site to accept a proton" evidence="1">
    <location>
        <position position="91"/>
    </location>
</feature>
<keyword id="KW-0963">Cytoplasm</keyword>
<keyword id="KW-0378">Hydrolase</keyword>
<keyword id="KW-1185">Reference proteome</keyword>
<keyword id="KW-0694">RNA-binding</keyword>
<keyword id="KW-0820">tRNA-binding</keyword>
<sequence>MKLFVGLGNPGPKYARNRHNIGFMALDQIAADHGFSPWRTKFSGQMAEGKFGSTKVTLLKPETFMNRSGQSVGEAMRFFKLEPEDVIVFHDELDLAPGKCRVKTGGGHAGHNGLRSIHGHIGPEYQRVRLGIGHPGHKDRVSGYVLSDFAKAEAAWLDDLLRGIGDGAPELAAGDTGRFMNAVSLRTAPPRSSGGSPKTDKPAKATREPPPAAKPEATPEEETRSPLQRLVDKFR</sequence>
<name>PTH_DINSH</name>